<feature type="chain" id="PRO_0000290171" description="Type IV secretion system protein virB4">
    <location>
        <begin position="1"/>
        <end position="831"/>
    </location>
</feature>
<feature type="binding site" evidence="1">
    <location>
        <begin position="457"/>
        <end position="464"/>
    </location>
    <ligand>
        <name>ATP</name>
        <dbReference type="ChEBI" id="CHEBI:30616"/>
    </ligand>
</feature>
<feature type="sequence conflict" description="In Ref. 1; AAD56614." evidence="2" ref="1">
    <original>W</original>
    <variation>R</variation>
    <location>
        <position position="80"/>
    </location>
</feature>
<sequence>MGAQSKYAQQLNNERSLAPFIPFRSQVGPTTVITRDGDFVRTWRIAGLAFETQDKEELLIRKDQLNTLFRAIASNNVALWSHNVRRRTWDHLKSFFSNPFCDALDKKYYGSFSGYRMMSNELYLTVIYRPVPAKISRLFNVAVHRSHAEILQEQQLAIRKLDEIGNQIETSLRRYGGDDGRGIEVLSTYEDKHGALCSQQLEFYNFLLSGEWQKVRVPSCPLDEYLGTGWVYAGTETIEIRTANATRYARGIDFKDYASHTEPGILNGLMYSDYEYVITQSFSFMTKRDGKEFLTRQKQRLQNTEDGSASQIMEMDIAIDQLGRGDFVMGEYHYSLLVFAEDMETVRHNTSHAMNILQDNGFLATVIATATDAAFYAQLPCNWRYRPRVAGLTSLNFAGLSCFHNFRAGKRDGNPWGQALTLLKTPSGQPAYLNFHYSKGDEDNFDKKLLGNTRIIGQSGAGKTVLMNFCLAQAQKYLHNAPMGMCNVFFDKDQGAKGTILAIGGKYLAIRNGEPTGFNPFQMEPTAGNILFLEKLVQVLVSRDGQHVTTTDESRISHAIRTVMRMRPELRRLSTVLQNVTEGSDRQDRENSVAKRLAKWCFDDGTGKRGTFWWVLDCPQDQIDFNTHSNYGFDGTDFLDNADVRTPISMYLLHRMELAIDGRRFIYWMDEAWKWVDDEAFSEFANNKQLTIRKQNGLGVFATQMPSSLLNSKVASALVQQVATEIYLPNPKADYHEYTDGFKVTNEEFDIIRSMSEESRMFLVKQGHHSMICRLELNGFDDELAILSGSSDNNELLDQVIAEVGDDPSVWLPVFQERRKARIASSKSTGR</sequence>
<evidence type="ECO:0000255" key="1"/>
<evidence type="ECO:0000305" key="2"/>
<name>VIRB4_BRUSU</name>
<protein>
    <recommendedName>
        <fullName>Type IV secretion system protein virB4</fullName>
    </recommendedName>
</protein>
<comment type="function">
    <text>The VirB system could be required for the establishment of the replication niche in the host.</text>
</comment>
<comment type="induction">
    <text>Specifically induced within macrophages by phagosome acidification. Induced at 37 degrees Celsius in minimal medium, suggesting that nutritional stress is a regulating signal.</text>
</comment>
<comment type="miscellaneous">
    <text>Transcription of the operon is maximal in early exponential phase.</text>
</comment>
<comment type="similarity">
    <text evidence="2">Belongs to the TrbE/VirB4 family.</text>
</comment>
<comment type="sequence caution" evidence="2">
    <conflict type="erroneous initiation">
        <sequence resource="EMBL-CDS" id="AAD56614"/>
    </conflict>
</comment>
<keyword id="KW-0067">ATP-binding</keyword>
<keyword id="KW-0547">Nucleotide-binding</keyword>
<keyword id="KW-0843">Virulence</keyword>
<organism>
    <name type="scientific">Brucella suis biovar 1 (strain 1330)</name>
    <dbReference type="NCBI Taxonomy" id="204722"/>
    <lineage>
        <taxon>Bacteria</taxon>
        <taxon>Pseudomonadati</taxon>
        <taxon>Pseudomonadota</taxon>
        <taxon>Alphaproteobacteria</taxon>
        <taxon>Hyphomicrobiales</taxon>
        <taxon>Brucellaceae</taxon>
        <taxon>Brucella/Ochrobactrum group</taxon>
        <taxon>Brucella</taxon>
    </lineage>
</organism>
<accession>Q9RPY1</accession>
<accession>G0KER4</accession>
<accession>Q8FXK3</accession>
<gene>
    <name type="primary">virB4</name>
    <name type="ordered locus">BRA0066</name>
    <name type="ordered locus">BS1330_II0066</name>
</gene>
<dbReference type="EMBL" id="AF141604">
    <property type="protein sequence ID" value="AAD56614.1"/>
    <property type="status" value="ALT_INIT"/>
    <property type="molecule type" value="Genomic_DNA"/>
</dbReference>
<dbReference type="EMBL" id="AE014292">
    <property type="protein sequence ID" value="AAN33278.1"/>
    <property type="molecule type" value="Genomic_DNA"/>
</dbReference>
<dbReference type="EMBL" id="CP002998">
    <property type="protein sequence ID" value="AEM19558.1"/>
    <property type="molecule type" value="Genomic_DNA"/>
</dbReference>
<dbReference type="RefSeq" id="WP_004688809.1">
    <property type="nucleotide sequence ID" value="NZ_KN046805.1"/>
</dbReference>
<dbReference type="SMR" id="Q9RPY1"/>
<dbReference type="DIP" id="DIP-61162N"/>
<dbReference type="IntAct" id="Q9RPY1">
    <property type="interactions" value="1"/>
</dbReference>
<dbReference type="GeneID" id="45053163"/>
<dbReference type="KEGG" id="bms:BRA0066"/>
<dbReference type="KEGG" id="bsi:BS1330_II0066"/>
<dbReference type="PATRIC" id="fig|204722.21.peg.2304"/>
<dbReference type="HOGENOM" id="CLU_008341_3_0_5"/>
<dbReference type="PRO" id="PR:Q9RPY1"/>
<dbReference type="Proteomes" id="UP000007104">
    <property type="component" value="Chromosome II"/>
</dbReference>
<dbReference type="GO" id="GO:0005524">
    <property type="term" value="F:ATP binding"/>
    <property type="evidence" value="ECO:0007669"/>
    <property type="project" value="UniProtKB-KW"/>
</dbReference>
<dbReference type="Gene3D" id="3.40.50.300">
    <property type="entry name" value="P-loop containing nucleotide triphosphate hydrolases"/>
    <property type="match status" value="1"/>
</dbReference>
<dbReference type="InterPro" id="IPR004346">
    <property type="entry name" value="CagE_TrbE_VirB"/>
</dbReference>
<dbReference type="InterPro" id="IPR018145">
    <property type="entry name" value="CagE_TrbE_VirB_cntrl_dom"/>
</dbReference>
<dbReference type="InterPro" id="IPR027417">
    <property type="entry name" value="P-loop_NTPase"/>
</dbReference>
<dbReference type="InterPro" id="IPR043964">
    <property type="entry name" value="P-loop_TraG"/>
</dbReference>
<dbReference type="InterPro" id="IPR051162">
    <property type="entry name" value="T4SS_component"/>
</dbReference>
<dbReference type="NCBIfam" id="TIGR00929">
    <property type="entry name" value="VirB4_CagE"/>
    <property type="match status" value="1"/>
</dbReference>
<dbReference type="PANTHER" id="PTHR30121:SF12">
    <property type="entry name" value="TYPE IV SECRETION SYSTEM PROTEIN CAGE"/>
    <property type="match status" value="1"/>
</dbReference>
<dbReference type="PANTHER" id="PTHR30121">
    <property type="entry name" value="UNCHARACTERIZED PROTEIN YJGR-RELATED"/>
    <property type="match status" value="1"/>
</dbReference>
<dbReference type="Pfam" id="PF03135">
    <property type="entry name" value="CagE_TrbE_VirB"/>
    <property type="match status" value="1"/>
</dbReference>
<dbReference type="Pfam" id="PF19044">
    <property type="entry name" value="P-loop_TraG"/>
    <property type="match status" value="1"/>
</dbReference>
<dbReference type="SUPFAM" id="SSF52540">
    <property type="entry name" value="P-loop containing nucleoside triphosphate hydrolases"/>
    <property type="match status" value="1"/>
</dbReference>
<proteinExistence type="evidence at transcript level"/>
<reference key="1">
    <citation type="journal article" date="1999" name="Mol. Microbiol.">
        <title>A homologue of the Agrobacterium tumefaciens VirB and Bordetella pertussis Ptl type IV secretion systems is essential for intracellular survival of Brucella suis.</title>
        <authorList>
            <person name="O'Callaghan D."/>
            <person name="Cazevieille C."/>
            <person name="Allardet-Servent A."/>
            <person name="Boschiroli M.L."/>
            <person name="Bourg G."/>
            <person name="Foulongne V."/>
            <person name="Frutos P."/>
            <person name="Kulakov Y."/>
            <person name="Ramuz M."/>
        </authorList>
    </citation>
    <scope>NUCLEOTIDE SEQUENCE [GENOMIC DNA]</scope>
    <source>
        <strain>1330</strain>
    </source>
</reference>
<reference key="2">
    <citation type="journal article" date="2002" name="Proc. Natl. Acad. Sci. U.S.A.">
        <title>The Brucella suis virB operon is induced intracellularly in macrophages.</title>
        <authorList>
            <person name="Boschiroli M.L."/>
            <person name="Ouahrani-Bettache S."/>
            <person name="Foulongne V."/>
            <person name="Michaux-Charachon S."/>
            <person name="Bourg G."/>
            <person name="Allardet-Servent A."/>
            <person name="Cazevieille C."/>
            <person name="Liautard J.P."/>
            <person name="Ramuz M."/>
            <person name="O'Callaghan D."/>
        </authorList>
    </citation>
    <scope>NUCLEOTIDE SEQUENCE [GENOMIC DNA]</scope>
    <scope>EXPRESSION CONDITIONS</scope>
    <source>
        <strain>1330</strain>
    </source>
</reference>
<reference key="3">
    <citation type="journal article" date="2002" name="Proc. Natl. Acad. Sci. U.S.A.">
        <title>The Brucella suis genome reveals fundamental similarities between animal and plant pathogens and symbionts.</title>
        <authorList>
            <person name="Paulsen I.T."/>
            <person name="Seshadri R."/>
            <person name="Nelson K.E."/>
            <person name="Eisen J.A."/>
            <person name="Heidelberg J.F."/>
            <person name="Read T.D."/>
            <person name="Dodson R.J."/>
            <person name="Umayam L.A."/>
            <person name="Brinkac L.M."/>
            <person name="Beanan M.J."/>
            <person name="Daugherty S.C."/>
            <person name="DeBoy R.T."/>
            <person name="Durkin A.S."/>
            <person name="Kolonay J.F."/>
            <person name="Madupu R."/>
            <person name="Nelson W.C."/>
            <person name="Ayodeji B."/>
            <person name="Kraul M."/>
            <person name="Shetty J."/>
            <person name="Malek J.A."/>
            <person name="Van Aken S.E."/>
            <person name="Riedmuller S."/>
            <person name="Tettelin H."/>
            <person name="Gill S.R."/>
            <person name="White O."/>
            <person name="Salzberg S.L."/>
            <person name="Hoover D.L."/>
            <person name="Lindler L.E."/>
            <person name="Halling S.M."/>
            <person name="Boyle S.M."/>
            <person name="Fraser C.M."/>
        </authorList>
    </citation>
    <scope>NUCLEOTIDE SEQUENCE [LARGE SCALE GENOMIC DNA]</scope>
    <source>
        <strain>1330</strain>
    </source>
</reference>
<reference key="4">
    <citation type="journal article" date="2011" name="J. Bacteriol.">
        <title>Revised genome sequence of Brucella suis 1330.</title>
        <authorList>
            <person name="Tae H."/>
            <person name="Shallom S."/>
            <person name="Settlage R."/>
            <person name="Preston D."/>
            <person name="Adams L.G."/>
            <person name="Garner H.R."/>
        </authorList>
    </citation>
    <scope>NUCLEOTIDE SEQUENCE [LARGE SCALE GENOMIC DNA]</scope>
    <source>
        <strain>1330</strain>
    </source>
</reference>